<keyword id="KW-1222">Bradykinin receptor impairing toxin</keyword>
<keyword id="KW-0903">Direct protein sequencing</keyword>
<keyword id="KW-1213">G-protein coupled receptor impairing toxin</keyword>
<keyword id="KW-0964">Secreted</keyword>
<keyword id="KW-0800">Toxin</keyword>
<comment type="function">
    <molecule>Thr6-bradykinin</molecule>
    <text evidence="1">Inhibits ACE with a Ki of 1.6 uM, and targets B2 bradykinin receptor (BDKRB2). Provokes contraction of smooth muscle preparation (ileum). In vivo, induces an early hyperalgesic effects in living rats after intraplantar injection (By similarity).</text>
</comment>
<comment type="function">
    <molecule>Megascoliakinin</molecule>
    <text>Has bradykinin-like, although lower activities (e.g. smooth muscle contraction). May target bradykinin receptors (BDKRB).</text>
</comment>
<comment type="subcellular location">
    <subcellularLocation>
        <location evidence="2">Secreted</location>
    </subcellularLocation>
</comment>
<comment type="tissue specificity">
    <text evidence="6">Expressed by the venom gland.</text>
</comment>
<comment type="similarity">
    <text evidence="5">Belongs to the bradykinin-related peptide family.</text>
</comment>
<organism>
    <name type="scientific">Megascolia flavifrons</name>
    <name type="common">Garden dagger wasp</name>
    <name type="synonym">Solitary wasp</name>
    <dbReference type="NCBI Taxonomy" id="7437"/>
    <lineage>
        <taxon>Eukaryota</taxon>
        <taxon>Metazoa</taxon>
        <taxon>Ecdysozoa</taxon>
        <taxon>Arthropoda</taxon>
        <taxon>Hexapoda</taxon>
        <taxon>Insecta</taxon>
        <taxon>Pterygota</taxon>
        <taxon>Neoptera</taxon>
        <taxon>Endopterygota</taxon>
        <taxon>Hymenoptera</taxon>
        <taxon>Apocrita</taxon>
        <taxon>Aculeata</taxon>
        <taxon>Scolioidea</taxon>
        <taxon>Scoliidae</taxon>
        <taxon>Megascolia</taxon>
    </lineage>
</organism>
<proteinExistence type="evidence at protein level"/>
<feature type="peptide" id="PRO_0000003381" description="Megascoliakinin" evidence="2">
    <location>
        <begin position="1"/>
        <end position="11"/>
    </location>
</feature>
<feature type="peptide" id="PRO_0000003382" description="Thr6-bradykinin" evidence="2">
    <location>
        <begin position="1"/>
        <end position="9"/>
    </location>
</feature>
<protein>
    <recommendedName>
        <fullName evidence="3">Megascoliakinin</fullName>
        <shortName evidence="3">MBK</shortName>
    </recommendedName>
    <alternativeName>
        <fullName evidence="4">Thr6-bradykinin-Lys-Ala</fullName>
    </alternativeName>
    <component>
        <recommendedName>
            <fullName evidence="4">Thr6-bradykinin</fullName>
        </recommendedName>
        <alternativeName>
            <fullName evidence="4">Bradykinin-like peptide</fullName>
        </alternativeName>
        <alternativeName>
            <fullName evidence="5">Bradykinin-related peptide</fullName>
        </alternativeName>
    </component>
</protein>
<sequence length="11" mass="1274">RPPGFTPFRKA</sequence>
<reference key="1">
    <citation type="journal article" date="1987" name="Toxicon">
        <title>Two kinins isolated from an extract of the venom reservoirs of the solitary wasp Megascolia flavifrons.</title>
        <authorList>
            <person name="Yasuhara T."/>
            <person name="Mantel P."/>
            <person name="Nakajima T."/>
            <person name="Piek T."/>
        </authorList>
    </citation>
    <scope>PROTEIN SEQUENCE</scope>
    <scope>SUBCELLULAR LOCATION</scope>
    <source>
        <tissue>Venom</tissue>
    </source>
</reference>
<reference key="2">
    <citation type="journal article" date="2016" name="Toxins">
        <title>Peptide toxins in solitary wasp venoms.</title>
        <authorList>
            <person name="Konno K."/>
            <person name="Kazuma K."/>
            <person name="Nihei K."/>
        </authorList>
    </citation>
    <scope>REVIEW</scope>
</reference>
<accession>P12797</accession>
<dbReference type="PIR" id="A26744">
    <property type="entry name" value="A26744"/>
</dbReference>
<dbReference type="PIR" id="B26744">
    <property type="entry name" value="B26744"/>
</dbReference>
<dbReference type="GO" id="GO:0005615">
    <property type="term" value="C:extracellular space"/>
    <property type="evidence" value="ECO:0000314"/>
    <property type="project" value="UniProtKB"/>
</dbReference>
<dbReference type="GO" id="GO:0090729">
    <property type="term" value="F:toxin activity"/>
    <property type="evidence" value="ECO:0007669"/>
    <property type="project" value="UniProtKB-KW"/>
</dbReference>
<dbReference type="GO" id="GO:0045776">
    <property type="term" value="P:negative regulation of blood pressure"/>
    <property type="evidence" value="ECO:0000250"/>
    <property type="project" value="UniProtKB"/>
</dbReference>
<dbReference type="GO" id="GO:0045987">
    <property type="term" value="P:positive regulation of smooth muscle contraction"/>
    <property type="evidence" value="ECO:0000304"/>
    <property type="project" value="UniProtKB"/>
</dbReference>
<name>BRK_MEGFL</name>
<evidence type="ECO:0000250" key="1"/>
<evidence type="ECO:0000269" key="2">
    <source>
    </source>
</evidence>
<evidence type="ECO:0000303" key="3">
    <source>
    </source>
</evidence>
<evidence type="ECO:0000303" key="4">
    <source>
    </source>
</evidence>
<evidence type="ECO:0000305" key="5"/>
<evidence type="ECO:0000305" key="6">
    <source>
    </source>
</evidence>